<keyword id="KW-0129">CBS domain</keyword>
<keyword id="KW-0521">NADP</keyword>
<keyword id="KW-0560">Oxidoreductase</keyword>
<keyword id="KW-0660">Purine salvage</keyword>
<keyword id="KW-1185">Reference proteome</keyword>
<keyword id="KW-0677">Repeat</keyword>
<name>GUAB1_MYCTO</name>
<evidence type="ECO:0000255" key="1">
    <source>
        <dbReference type="HAMAP-Rule" id="MF_02250"/>
    </source>
</evidence>
<feature type="chain" id="PRO_0000427649" description="GMP reductase">
    <location>
        <begin position="1"/>
        <end position="479"/>
    </location>
</feature>
<feature type="domain" description="CBS 1" evidence="1">
    <location>
        <begin position="96"/>
        <end position="153"/>
    </location>
</feature>
<feature type="domain" description="CBS 2" evidence="1">
    <location>
        <begin position="154"/>
        <end position="212"/>
    </location>
</feature>
<feature type="active site" description="Thioimidate intermediate" evidence="1">
    <location>
        <position position="303"/>
    </location>
</feature>
<feature type="binding site" evidence="1">
    <location>
        <begin position="246"/>
        <end position="248"/>
    </location>
    <ligand>
        <name>NADP(+)</name>
        <dbReference type="ChEBI" id="CHEBI:58349"/>
    </ligand>
</feature>
<feature type="binding site" evidence="1">
    <location>
        <begin position="296"/>
        <end position="298"/>
    </location>
    <ligand>
        <name>NADP(+)</name>
        <dbReference type="ChEBI" id="CHEBI:58349"/>
    </ligand>
</feature>
<proteinExistence type="inferred from homology"/>
<dbReference type="EC" id="1.7.1.7" evidence="1"/>
<dbReference type="EMBL" id="AE000516">
    <property type="protein sequence ID" value="AAK46162.1"/>
    <property type="molecule type" value="Genomic_DNA"/>
</dbReference>
<dbReference type="PIR" id="C70664">
    <property type="entry name" value="C70664"/>
</dbReference>
<dbReference type="RefSeq" id="WP_003902189.1">
    <property type="nucleotide sequence ID" value="NZ_KK341227.1"/>
</dbReference>
<dbReference type="SMR" id="P9WKI2"/>
<dbReference type="KEGG" id="mtc:MT1891"/>
<dbReference type="PATRIC" id="fig|83331.31.peg.2035"/>
<dbReference type="HOGENOM" id="CLU_022552_2_1_11"/>
<dbReference type="UniPathway" id="UPA00591"/>
<dbReference type="Proteomes" id="UP000001020">
    <property type="component" value="Chromosome"/>
</dbReference>
<dbReference type="GO" id="GO:0005829">
    <property type="term" value="C:cytosol"/>
    <property type="evidence" value="ECO:0007669"/>
    <property type="project" value="TreeGrafter"/>
</dbReference>
<dbReference type="GO" id="GO:0003920">
    <property type="term" value="F:GMP reductase activity"/>
    <property type="evidence" value="ECO:0007669"/>
    <property type="project" value="UniProtKB-UniRule"/>
</dbReference>
<dbReference type="GO" id="GO:0003938">
    <property type="term" value="F:IMP dehydrogenase activity"/>
    <property type="evidence" value="ECO:0007669"/>
    <property type="project" value="InterPro"/>
</dbReference>
<dbReference type="GO" id="GO:0032264">
    <property type="term" value="P:IMP salvage"/>
    <property type="evidence" value="ECO:0007669"/>
    <property type="project" value="UniProtKB-UniRule"/>
</dbReference>
<dbReference type="GO" id="GO:0006166">
    <property type="term" value="P:purine ribonucleoside salvage"/>
    <property type="evidence" value="ECO:0007669"/>
    <property type="project" value="UniProtKB-KW"/>
</dbReference>
<dbReference type="CDD" id="cd02205">
    <property type="entry name" value="CBS_pair_SF"/>
    <property type="match status" value="1"/>
</dbReference>
<dbReference type="CDD" id="cd00381">
    <property type="entry name" value="IMPDH"/>
    <property type="match status" value="1"/>
</dbReference>
<dbReference type="FunFam" id="3.20.20.70:FF:000108">
    <property type="entry name" value="IMP dehydrogenase family protein"/>
    <property type="match status" value="1"/>
</dbReference>
<dbReference type="Gene3D" id="3.20.20.70">
    <property type="entry name" value="Aldolase class I"/>
    <property type="match status" value="1"/>
</dbReference>
<dbReference type="HAMAP" id="MF_02250">
    <property type="entry name" value="GMPR_GuaB1"/>
    <property type="match status" value="1"/>
</dbReference>
<dbReference type="InterPro" id="IPR013785">
    <property type="entry name" value="Aldolase_TIM"/>
</dbReference>
<dbReference type="InterPro" id="IPR000644">
    <property type="entry name" value="CBS_dom"/>
</dbReference>
<dbReference type="InterPro" id="IPR046342">
    <property type="entry name" value="CBS_dom_sf"/>
</dbReference>
<dbReference type="InterPro" id="IPR050139">
    <property type="entry name" value="GMP_reductase"/>
</dbReference>
<dbReference type="InterPro" id="IPR005991">
    <property type="entry name" value="GUAB1"/>
</dbReference>
<dbReference type="InterPro" id="IPR005990">
    <property type="entry name" value="IMP_DH"/>
</dbReference>
<dbReference type="InterPro" id="IPR001093">
    <property type="entry name" value="IMP_DH_GMPRt"/>
</dbReference>
<dbReference type="NCBIfam" id="TIGR01303">
    <property type="entry name" value="IMP_DH_rel_1"/>
    <property type="match status" value="1"/>
</dbReference>
<dbReference type="NCBIfam" id="NF005869">
    <property type="entry name" value="PRK07807.1"/>
    <property type="match status" value="1"/>
</dbReference>
<dbReference type="PANTHER" id="PTHR43170">
    <property type="entry name" value="GMP REDUCTASE"/>
    <property type="match status" value="1"/>
</dbReference>
<dbReference type="PANTHER" id="PTHR43170:SF5">
    <property type="entry name" value="GMP REDUCTASE"/>
    <property type="match status" value="1"/>
</dbReference>
<dbReference type="Pfam" id="PF00571">
    <property type="entry name" value="CBS"/>
    <property type="match status" value="2"/>
</dbReference>
<dbReference type="Pfam" id="PF00478">
    <property type="entry name" value="IMPDH"/>
    <property type="match status" value="1"/>
</dbReference>
<dbReference type="PIRSF" id="PIRSF000130">
    <property type="entry name" value="IMPDH"/>
    <property type="match status" value="1"/>
</dbReference>
<dbReference type="SMART" id="SM01240">
    <property type="entry name" value="IMPDH"/>
    <property type="match status" value="1"/>
</dbReference>
<dbReference type="SUPFAM" id="SSF54631">
    <property type="entry name" value="CBS-domain pair"/>
    <property type="match status" value="1"/>
</dbReference>
<dbReference type="SUPFAM" id="SSF51412">
    <property type="entry name" value="Inosine monophosphate dehydrogenase (IMPDH)"/>
    <property type="match status" value="1"/>
</dbReference>
<dbReference type="PROSITE" id="PS51371">
    <property type="entry name" value="CBS"/>
    <property type="match status" value="2"/>
</dbReference>
<gene>
    <name evidence="1" type="primary">guaB1</name>
    <name type="ordered locus">MT1891</name>
</gene>
<reference key="1">
    <citation type="journal article" date="2002" name="J. Bacteriol.">
        <title>Whole-genome comparison of Mycobacterium tuberculosis clinical and laboratory strains.</title>
        <authorList>
            <person name="Fleischmann R.D."/>
            <person name="Alland D."/>
            <person name="Eisen J.A."/>
            <person name="Carpenter L."/>
            <person name="White O."/>
            <person name="Peterson J.D."/>
            <person name="DeBoy R.T."/>
            <person name="Dodson R.J."/>
            <person name="Gwinn M.L."/>
            <person name="Haft D.H."/>
            <person name="Hickey E.K."/>
            <person name="Kolonay J.F."/>
            <person name="Nelson W.C."/>
            <person name="Umayam L.A."/>
            <person name="Ermolaeva M.D."/>
            <person name="Salzberg S.L."/>
            <person name="Delcher A."/>
            <person name="Utterback T.R."/>
            <person name="Weidman J.F."/>
            <person name="Khouri H.M."/>
            <person name="Gill J."/>
            <person name="Mikula A."/>
            <person name="Bishai W."/>
            <person name="Jacobs W.R. Jr."/>
            <person name="Venter J.C."/>
            <person name="Fraser C.M."/>
        </authorList>
    </citation>
    <scope>NUCLEOTIDE SEQUENCE [LARGE SCALE GENOMIC DNA]</scope>
    <source>
        <strain>CDC 1551 / Oshkosh</strain>
    </source>
</reference>
<accession>P9WKI2</accession>
<accession>L0TAS0</accession>
<accession>P65172</accession>
<accession>Q50591</accession>
<organism>
    <name type="scientific">Mycobacterium tuberculosis (strain CDC 1551 / Oshkosh)</name>
    <dbReference type="NCBI Taxonomy" id="83331"/>
    <lineage>
        <taxon>Bacteria</taxon>
        <taxon>Bacillati</taxon>
        <taxon>Actinomycetota</taxon>
        <taxon>Actinomycetes</taxon>
        <taxon>Mycobacteriales</taxon>
        <taxon>Mycobacteriaceae</taxon>
        <taxon>Mycobacterium</taxon>
        <taxon>Mycobacterium tuberculosis complex</taxon>
    </lineage>
</organism>
<protein>
    <recommendedName>
        <fullName evidence="1">GMP reductase</fullName>
        <ecNumber evidence="1">1.7.1.7</ecNumber>
    </recommendedName>
    <alternativeName>
        <fullName evidence="1">Guanosine 5'-monophosphate reductase</fullName>
        <shortName evidence="1">GMPR</shortName>
    </alternativeName>
</protein>
<sequence>MMRFLDGHPPGYDLTYNDVFIVPNRSEVASRFDVDLSTADGSGTTIPVVVANMTAVAGRRMAETVARRGGIVILPQDLPIPAVKQTVAFVKSRDLVLDTPVTLAPDDSVSDAMALIHKRAHGVAVVILEGRPIGLVRESSCLGVDRFTRVRDIAVTDYVTAPAGTEPRKIFDLLEHAPVDVAVLTDADGTLAGVLSRTGAIRAGIYTPATDSAGRLRIGAAVGINGDVGAKARALAEAGVDVLVIDTAHGHQVKTLDAIKAVSALDLGLPLAAGNVVSAEGTRDLLKAGANVVKVGVGPGAMCTTRMMTGVGRPQFSAVLECASAARQLGGHIWADGGIRHPRDVALALAAGASNVMIGSWFAGTYESPGDLMRDRDDQPYKESYGMASKRAVVARTGADNPFDRARKALFEEGISTSRMGLDPDRGGVEDLIDHITSGVRSTCTYVGASNLAELHERAVVGVQSGAGFAEGHPLPAGW</sequence>
<comment type="function">
    <text evidence="1">Involved in the purine-salvage pathway. Catalyzes the NADPH-dependent conversion of GMP to IMP.</text>
</comment>
<comment type="catalytic activity">
    <reaction evidence="1">
        <text>IMP + NH4(+) + NADP(+) = GMP + NADPH + 2 H(+)</text>
        <dbReference type="Rhea" id="RHEA:17185"/>
        <dbReference type="ChEBI" id="CHEBI:15378"/>
        <dbReference type="ChEBI" id="CHEBI:28938"/>
        <dbReference type="ChEBI" id="CHEBI:57783"/>
        <dbReference type="ChEBI" id="CHEBI:58053"/>
        <dbReference type="ChEBI" id="CHEBI:58115"/>
        <dbReference type="ChEBI" id="CHEBI:58349"/>
        <dbReference type="EC" id="1.7.1.7"/>
    </reaction>
    <physiologicalReaction direction="right-to-left" evidence="1">
        <dbReference type="Rhea" id="RHEA:17187"/>
    </physiologicalReaction>
</comment>
<comment type="cofactor">
    <cofactor evidence="1">
        <name>a monovalent cation</name>
        <dbReference type="ChEBI" id="CHEBI:60242"/>
    </cofactor>
</comment>
<comment type="pathway">
    <text evidence="1">Purine metabolism; IMP biosynthesis via salvage pathway.</text>
</comment>
<comment type="similarity">
    <text evidence="1">Belongs to the IMPDH/GMPR family. GuaB1 subfamily.</text>
</comment>